<feature type="signal peptide" evidence="3">
    <location>
        <begin position="1"/>
        <end position="22"/>
    </location>
</feature>
<feature type="chain" id="PRO_0000401298" description="G-type lectin S-receptor-like serine/threonine-protein kinase CES101">
    <location>
        <begin position="23"/>
        <end position="850"/>
    </location>
</feature>
<feature type="topological domain" description="Extracellular" evidence="3">
    <location>
        <begin position="23"/>
        <end position="423"/>
    </location>
</feature>
<feature type="transmembrane region" description="Helical" evidence="3">
    <location>
        <begin position="424"/>
        <end position="444"/>
    </location>
</feature>
<feature type="topological domain" description="Cytoplasmic" evidence="3">
    <location>
        <begin position="445"/>
        <end position="850"/>
    </location>
</feature>
<feature type="domain" description="Bulb-type lectin" evidence="4">
    <location>
        <begin position="24"/>
        <end position="144"/>
    </location>
</feature>
<feature type="domain" description="PAN" evidence="6">
    <location>
        <begin position="334"/>
        <end position="416"/>
    </location>
</feature>
<feature type="domain" description="Protein kinase" evidence="5">
    <location>
        <begin position="527"/>
        <end position="816"/>
    </location>
</feature>
<feature type="region of interest" description="CaM-binding" evidence="1">
    <location>
        <begin position="616"/>
        <end position="633"/>
    </location>
</feature>
<feature type="active site" description="Proton acceptor" evidence="5 7">
    <location>
        <position position="652"/>
    </location>
</feature>
<feature type="binding site" evidence="5">
    <location>
        <begin position="533"/>
        <end position="541"/>
    </location>
    <ligand>
        <name>ATP</name>
        <dbReference type="ChEBI" id="CHEBI:30616"/>
    </ligand>
</feature>
<feature type="binding site" evidence="5">
    <location>
        <position position="555"/>
    </location>
    <ligand>
        <name>ATP</name>
        <dbReference type="ChEBI" id="CHEBI:30616"/>
    </ligand>
</feature>
<feature type="modified residue" description="Phosphoserine" evidence="2">
    <location>
        <position position="561"/>
    </location>
</feature>
<feature type="modified residue" description="Phosphoserine" evidence="2">
    <location>
        <position position="669"/>
    </location>
</feature>
<feature type="modified residue" description="Phosphothreonine" evidence="2">
    <location>
        <position position="686"/>
    </location>
</feature>
<feature type="modified residue" description="Phosphoserine" evidence="2">
    <location>
        <position position="730"/>
    </location>
</feature>
<feature type="modified residue" description="Phosphoserine" evidence="2">
    <location>
        <position position="838"/>
    </location>
</feature>
<feature type="modified residue" description="Phosphothreonine" evidence="2">
    <location>
        <position position="845"/>
    </location>
</feature>
<feature type="glycosylation site" description="N-linked (GlcNAc...) asparagine" evidence="3">
    <location>
        <position position="55"/>
    </location>
</feature>
<feature type="glycosylation site" description="N-linked (GlcNAc...) asparagine" evidence="3">
    <location>
        <position position="118"/>
    </location>
</feature>
<feature type="glycosylation site" description="N-linked (GlcNAc...) asparagine" evidence="3">
    <location>
        <position position="194"/>
    </location>
</feature>
<feature type="glycosylation site" description="N-linked (GlcNAc...) asparagine" evidence="3">
    <location>
        <position position="374"/>
    </location>
</feature>
<feature type="disulfide bond" evidence="1">
    <location>
        <begin position="367"/>
        <end position="390"/>
    </location>
</feature>
<feature type="disulfide bond" evidence="1">
    <location>
        <begin position="371"/>
        <end position="377"/>
    </location>
</feature>
<dbReference type="EC" id="2.7.11.1"/>
<dbReference type="EMBL" id="AB012247">
    <property type="protein sequence ID" value="BAB02668.1"/>
    <property type="status" value="ALT_SEQ"/>
    <property type="molecule type" value="Genomic_DNA"/>
</dbReference>
<dbReference type="EMBL" id="CP002686">
    <property type="protein sequence ID" value="AEE75764.1"/>
    <property type="molecule type" value="Genomic_DNA"/>
</dbReference>
<dbReference type="RefSeq" id="NP_188224.1">
    <property type="nucleotide sequence ID" value="NM_112473.2"/>
</dbReference>
<dbReference type="SMR" id="Q9LW83"/>
<dbReference type="FunCoup" id="Q9LW83">
    <property type="interactions" value="32"/>
</dbReference>
<dbReference type="STRING" id="3702.Q9LW83"/>
<dbReference type="GlyCosmos" id="Q9LW83">
    <property type="glycosylation" value="4 sites, No reported glycans"/>
</dbReference>
<dbReference type="GlyGen" id="Q9LW83">
    <property type="glycosylation" value="4 sites"/>
</dbReference>
<dbReference type="PaxDb" id="3702-AT3G16030.1"/>
<dbReference type="ProteomicsDB" id="222605"/>
<dbReference type="EnsemblPlants" id="AT3G16030.1">
    <property type="protein sequence ID" value="AT3G16030.1"/>
    <property type="gene ID" value="AT3G16030"/>
</dbReference>
<dbReference type="GeneID" id="820848"/>
<dbReference type="Gramene" id="AT3G16030.1">
    <property type="protein sequence ID" value="AT3G16030.1"/>
    <property type="gene ID" value="AT3G16030"/>
</dbReference>
<dbReference type="KEGG" id="ath:AT3G16030"/>
<dbReference type="Araport" id="AT3G16030"/>
<dbReference type="TAIR" id="AT3G16030">
    <property type="gene designation" value="CES101"/>
</dbReference>
<dbReference type="eggNOG" id="ENOG502QTRQ">
    <property type="taxonomic scope" value="Eukaryota"/>
</dbReference>
<dbReference type="HOGENOM" id="CLU_000288_116_7_1"/>
<dbReference type="InParanoid" id="Q9LW83"/>
<dbReference type="PRO" id="PR:Q9LW83"/>
<dbReference type="Proteomes" id="UP000006548">
    <property type="component" value="Chromosome 3"/>
</dbReference>
<dbReference type="ExpressionAtlas" id="Q9LW83">
    <property type="expression patterns" value="baseline and differential"/>
</dbReference>
<dbReference type="GO" id="GO:0005886">
    <property type="term" value="C:plasma membrane"/>
    <property type="evidence" value="ECO:0007669"/>
    <property type="project" value="UniProtKB-SubCell"/>
</dbReference>
<dbReference type="GO" id="GO:0005524">
    <property type="term" value="F:ATP binding"/>
    <property type="evidence" value="ECO:0007669"/>
    <property type="project" value="UniProtKB-KW"/>
</dbReference>
<dbReference type="GO" id="GO:0005516">
    <property type="term" value="F:calmodulin binding"/>
    <property type="evidence" value="ECO:0000250"/>
    <property type="project" value="UniProtKB"/>
</dbReference>
<dbReference type="GO" id="GO:0030246">
    <property type="term" value="F:carbohydrate binding"/>
    <property type="evidence" value="ECO:0007669"/>
    <property type="project" value="UniProtKB-KW"/>
</dbReference>
<dbReference type="GO" id="GO:0106310">
    <property type="term" value="F:protein serine kinase activity"/>
    <property type="evidence" value="ECO:0007669"/>
    <property type="project" value="RHEA"/>
</dbReference>
<dbReference type="GO" id="GO:0004674">
    <property type="term" value="F:protein serine/threonine kinase activity"/>
    <property type="evidence" value="ECO:0000250"/>
    <property type="project" value="UniProtKB"/>
</dbReference>
<dbReference type="GO" id="GO:0045087">
    <property type="term" value="P:innate immune response"/>
    <property type="evidence" value="ECO:0000315"/>
    <property type="project" value="TAIR"/>
</dbReference>
<dbReference type="GO" id="GO:0009620">
    <property type="term" value="P:response to fungus"/>
    <property type="evidence" value="ECO:0000315"/>
    <property type="project" value="TAIR"/>
</dbReference>
<dbReference type="CDD" id="cd00028">
    <property type="entry name" value="B_lectin"/>
    <property type="match status" value="1"/>
</dbReference>
<dbReference type="CDD" id="cd01098">
    <property type="entry name" value="PAN_AP_plant"/>
    <property type="match status" value="1"/>
</dbReference>
<dbReference type="CDD" id="cd14066">
    <property type="entry name" value="STKc_IRAK"/>
    <property type="match status" value="1"/>
</dbReference>
<dbReference type="FunFam" id="1.10.510.10:FF:000345">
    <property type="entry name" value="G-type lectin S-receptor-like serine/threonine-protein kinase"/>
    <property type="match status" value="1"/>
</dbReference>
<dbReference type="FunFam" id="3.30.200.20:FF:000195">
    <property type="entry name" value="G-type lectin S-receptor-like serine/threonine-protein kinase"/>
    <property type="match status" value="1"/>
</dbReference>
<dbReference type="FunFam" id="2.90.10.10:FF:000009">
    <property type="entry name" value="Receptor-like serine/threonine-protein kinase SD1-8"/>
    <property type="match status" value="1"/>
</dbReference>
<dbReference type="Gene3D" id="2.90.10.10">
    <property type="entry name" value="Bulb-type lectin domain"/>
    <property type="match status" value="1"/>
</dbReference>
<dbReference type="Gene3D" id="3.30.200.20">
    <property type="entry name" value="Phosphorylase Kinase, domain 1"/>
    <property type="match status" value="1"/>
</dbReference>
<dbReference type="Gene3D" id="1.10.510.10">
    <property type="entry name" value="Transferase(Phosphotransferase) domain 1"/>
    <property type="match status" value="1"/>
</dbReference>
<dbReference type="InterPro" id="IPR001480">
    <property type="entry name" value="Bulb-type_lectin_dom"/>
</dbReference>
<dbReference type="InterPro" id="IPR036426">
    <property type="entry name" value="Bulb-type_lectin_dom_sf"/>
</dbReference>
<dbReference type="InterPro" id="IPR011009">
    <property type="entry name" value="Kinase-like_dom_sf"/>
</dbReference>
<dbReference type="InterPro" id="IPR003609">
    <property type="entry name" value="Pan_app"/>
</dbReference>
<dbReference type="InterPro" id="IPR000719">
    <property type="entry name" value="Prot_kinase_dom"/>
</dbReference>
<dbReference type="InterPro" id="IPR001245">
    <property type="entry name" value="Ser-Thr/Tyr_kinase_cat_dom"/>
</dbReference>
<dbReference type="InterPro" id="IPR008271">
    <property type="entry name" value="Ser/Thr_kinase_AS"/>
</dbReference>
<dbReference type="InterPro" id="IPR024171">
    <property type="entry name" value="SRK-like_kinase"/>
</dbReference>
<dbReference type="PANTHER" id="PTHR27002:SF1015">
    <property type="entry name" value="G-TYPE LECTIN S-RECEPTOR-LIKE SERINE_THREONINE-PROTEIN KINASE CES101"/>
    <property type="match status" value="1"/>
</dbReference>
<dbReference type="PANTHER" id="PTHR27002">
    <property type="entry name" value="RECEPTOR-LIKE SERINE/THREONINE-PROTEIN KINASE SD1-8"/>
    <property type="match status" value="1"/>
</dbReference>
<dbReference type="Pfam" id="PF01453">
    <property type="entry name" value="B_lectin"/>
    <property type="match status" value="1"/>
</dbReference>
<dbReference type="Pfam" id="PF08276">
    <property type="entry name" value="PAN_2"/>
    <property type="match status" value="1"/>
</dbReference>
<dbReference type="Pfam" id="PF07714">
    <property type="entry name" value="PK_Tyr_Ser-Thr"/>
    <property type="match status" value="1"/>
</dbReference>
<dbReference type="PIRSF" id="PIRSF000641">
    <property type="entry name" value="SRK"/>
    <property type="match status" value="1"/>
</dbReference>
<dbReference type="SMART" id="SM00108">
    <property type="entry name" value="B_lectin"/>
    <property type="match status" value="1"/>
</dbReference>
<dbReference type="SMART" id="SM00220">
    <property type="entry name" value="S_TKc"/>
    <property type="match status" value="1"/>
</dbReference>
<dbReference type="SUPFAM" id="SSF51110">
    <property type="entry name" value="alpha-D-mannose-specific plant lectins"/>
    <property type="match status" value="1"/>
</dbReference>
<dbReference type="SUPFAM" id="SSF56112">
    <property type="entry name" value="Protein kinase-like (PK-like)"/>
    <property type="match status" value="1"/>
</dbReference>
<dbReference type="PROSITE" id="PS50927">
    <property type="entry name" value="BULB_LECTIN"/>
    <property type="match status" value="1"/>
</dbReference>
<dbReference type="PROSITE" id="PS50948">
    <property type="entry name" value="PAN"/>
    <property type="match status" value="1"/>
</dbReference>
<dbReference type="PROSITE" id="PS50011">
    <property type="entry name" value="PROTEIN_KINASE_DOM"/>
    <property type="match status" value="1"/>
</dbReference>
<dbReference type="PROSITE" id="PS00108">
    <property type="entry name" value="PROTEIN_KINASE_ST"/>
    <property type="match status" value="1"/>
</dbReference>
<accession>Q9LW83</accession>
<proteinExistence type="evidence at transcript level"/>
<reference key="1">
    <citation type="journal article" date="2000" name="DNA Res.">
        <title>Structural analysis of Arabidopsis thaliana chromosome 3. I. Sequence features of the regions of 4,504,864 bp covered by sixty P1 and TAC clones.</title>
        <authorList>
            <person name="Sato S."/>
            <person name="Nakamura Y."/>
            <person name="Kaneko T."/>
            <person name="Katoh T."/>
            <person name="Asamizu E."/>
            <person name="Tabata S."/>
        </authorList>
    </citation>
    <scope>NUCLEOTIDE SEQUENCE [LARGE SCALE GENOMIC DNA]</scope>
    <source>
        <strain>cv. Columbia</strain>
    </source>
</reference>
<reference key="2">
    <citation type="journal article" date="2017" name="Plant J.">
        <title>Araport11: a complete reannotation of the Arabidopsis thaliana reference genome.</title>
        <authorList>
            <person name="Cheng C.Y."/>
            <person name="Krishnakumar V."/>
            <person name="Chan A.P."/>
            <person name="Thibaud-Nissen F."/>
            <person name="Schobel S."/>
            <person name="Town C.D."/>
        </authorList>
    </citation>
    <scope>GENOME REANNOTATION</scope>
    <source>
        <strain>cv. Columbia</strain>
    </source>
</reference>
<reference key="3">
    <citation type="journal article" date="2006" name="Plant Cell Physiol.">
        <title>Arabidopsis mutants by activation tagging in which photosynthesis genes are expressed in dedifferentiated calli.</title>
        <authorList>
            <person name="Niwa Y."/>
            <person name="Goto S."/>
            <person name="Nakano T."/>
            <person name="Sakaiya M."/>
            <person name="Hirano T."/>
            <person name="Tsukaya H."/>
            <person name="Komeda Y."/>
            <person name="Kobayashi H."/>
        </authorList>
    </citation>
    <scope>TISSUE SPECIFICITY</scope>
    <scope>FUNCTION</scope>
</reference>
<sequence length="850" mass="96285">MWSNCIFLTLFTFYLFLGQSCCQTDTLLQGQYLKDGQELVSAFNIFKLKFFNFENSSNWYLGIWYNNFYLSGAVWIANRNNPVLGRSGSLTVDSLGRLRILRGASSLLELSSTETTGNTTLKLLDSGNLQLQEMDSDGSMKRTLWQSFDYPTDTLLPGMKLGFNVKTGKRWELTSWLGDTLPASGSFVFGMDDNITNRLTILWLGNVYWASGLWFKGGFSLEKLNTNGFIFSFVSTESEHYFMYSGDENYGGPLFPRIRIDQQGSLQKINLDGVKKHVHCSPSVFGEELEYGCYQQNFRNCVPARYKEVTGSWDCSPFGFGYTYTRKTYDLSYCSRFGYTFRETVSPSAENGFVFNEIGRRLSSYDCYVKCLQNCSCVAYASTNGDGTGCEIWNTDPTNENSASHHPRTIYIRIKGSKLAATWLVVVASLFLIIPVTWLIIYLVLRKFKIKGTNFVSESLKMISSQSCSLTNKRLSTLRVGSTIDQEMLLLELGIERRRRGKRSARNNNNELQIFSFESVAFATDYFSDANKLGEGGFGPVYKGRLIDGEEVAIKRLSLASGQGLVEFKNEAMLIAKLQHTNLVKLLGCCVEKDEKMLIYEYMPNKSLDYFLFDPLRKIVLDWKLRFRIMEGIIQGLLYLHKYSRLKVIHRDIKAGNILLDEDMNPKISDFGMARIFGAQESKANTKRVAGTFGYMSPEYFREGLFSAKSDVFSFGVLMLEIICGRKNNSFHHDSEGPLNLIVHVWNLFKENRVREVIDPSLGDSAVENPQVLRCVQVALLCVQQNADDRPSMLDVVSMIYGDGNNALSLPKEPAFYDGPPRSSPEMEVEPPEMENVSANRVTITVMEAR</sequence>
<evidence type="ECO:0000250" key="1"/>
<evidence type="ECO:0000250" key="2">
    <source>
        <dbReference type="UniProtKB" id="Q9LPZ9"/>
    </source>
</evidence>
<evidence type="ECO:0000255" key="3"/>
<evidence type="ECO:0000255" key="4">
    <source>
        <dbReference type="PROSITE-ProRule" id="PRU00038"/>
    </source>
</evidence>
<evidence type="ECO:0000255" key="5">
    <source>
        <dbReference type="PROSITE-ProRule" id="PRU00159"/>
    </source>
</evidence>
<evidence type="ECO:0000255" key="6">
    <source>
        <dbReference type="PROSITE-ProRule" id="PRU00315"/>
    </source>
</evidence>
<evidence type="ECO:0000255" key="7">
    <source>
        <dbReference type="PROSITE-ProRule" id="PRU10027"/>
    </source>
</evidence>
<evidence type="ECO:0000269" key="8">
    <source>
    </source>
</evidence>
<evidence type="ECO:0000305" key="9"/>
<keyword id="KW-0067">ATP-binding</keyword>
<keyword id="KW-1003">Cell membrane</keyword>
<keyword id="KW-1015">Disulfide bond</keyword>
<keyword id="KW-0325">Glycoprotein</keyword>
<keyword id="KW-0418">Kinase</keyword>
<keyword id="KW-0430">Lectin</keyword>
<keyword id="KW-0472">Membrane</keyword>
<keyword id="KW-0547">Nucleotide-binding</keyword>
<keyword id="KW-0597">Phosphoprotein</keyword>
<keyword id="KW-0675">Receptor</keyword>
<keyword id="KW-1185">Reference proteome</keyword>
<keyword id="KW-0723">Serine/threonine-protein kinase</keyword>
<keyword id="KW-0732">Signal</keyword>
<keyword id="KW-0808">Transferase</keyword>
<keyword id="KW-0812">Transmembrane</keyword>
<keyword id="KW-1133">Transmembrane helix</keyword>
<gene>
    <name type="primary">CES101</name>
    <name type="ordered locus">At3g16030</name>
    <name type="ORF">MSL1.2</name>
</gene>
<protein>
    <recommendedName>
        <fullName>G-type lectin S-receptor-like serine/threonine-protein kinase CES101</fullName>
        <ecNumber>2.7.11.1</ecNumber>
    </recommendedName>
    <alternativeName>
        <fullName>Protein CALLUS EXPRESSION OF RBCS 101</fullName>
    </alternativeName>
</protein>
<name>CE101_ARATH</name>
<organism>
    <name type="scientific">Arabidopsis thaliana</name>
    <name type="common">Mouse-ear cress</name>
    <dbReference type="NCBI Taxonomy" id="3702"/>
    <lineage>
        <taxon>Eukaryota</taxon>
        <taxon>Viridiplantae</taxon>
        <taxon>Streptophyta</taxon>
        <taxon>Embryophyta</taxon>
        <taxon>Tracheophyta</taxon>
        <taxon>Spermatophyta</taxon>
        <taxon>Magnoliopsida</taxon>
        <taxon>eudicotyledons</taxon>
        <taxon>Gunneridae</taxon>
        <taxon>Pentapetalae</taxon>
        <taxon>rosids</taxon>
        <taxon>malvids</taxon>
        <taxon>Brassicales</taxon>
        <taxon>Brassicaceae</taxon>
        <taxon>Camelineae</taxon>
        <taxon>Arabidopsis</taxon>
    </lineage>
</organism>
<comment type="function">
    <text evidence="8">Promotes the expression of genes involved in photosynthesis at least in dedifferentiated calli.</text>
</comment>
<comment type="catalytic activity">
    <reaction>
        <text>L-seryl-[protein] + ATP = O-phospho-L-seryl-[protein] + ADP + H(+)</text>
        <dbReference type="Rhea" id="RHEA:17989"/>
        <dbReference type="Rhea" id="RHEA-COMP:9863"/>
        <dbReference type="Rhea" id="RHEA-COMP:11604"/>
        <dbReference type="ChEBI" id="CHEBI:15378"/>
        <dbReference type="ChEBI" id="CHEBI:29999"/>
        <dbReference type="ChEBI" id="CHEBI:30616"/>
        <dbReference type="ChEBI" id="CHEBI:83421"/>
        <dbReference type="ChEBI" id="CHEBI:456216"/>
        <dbReference type="EC" id="2.7.11.1"/>
    </reaction>
</comment>
<comment type="catalytic activity">
    <reaction>
        <text>L-threonyl-[protein] + ATP = O-phospho-L-threonyl-[protein] + ADP + H(+)</text>
        <dbReference type="Rhea" id="RHEA:46608"/>
        <dbReference type="Rhea" id="RHEA-COMP:11060"/>
        <dbReference type="Rhea" id="RHEA-COMP:11605"/>
        <dbReference type="ChEBI" id="CHEBI:15378"/>
        <dbReference type="ChEBI" id="CHEBI:30013"/>
        <dbReference type="ChEBI" id="CHEBI:30616"/>
        <dbReference type="ChEBI" id="CHEBI:61977"/>
        <dbReference type="ChEBI" id="CHEBI:456216"/>
        <dbReference type="EC" id="2.7.11.1"/>
    </reaction>
</comment>
<comment type="subcellular location">
    <subcellularLocation>
        <location evidence="1">Cell membrane</location>
        <topology evidence="1">Single-pass type I membrane protein</topology>
    </subcellularLocation>
</comment>
<comment type="tissue specificity">
    <text evidence="8">Mostly expressed in leaves, and, to a lower extent, in roots and flowers.</text>
</comment>
<comment type="similarity">
    <text evidence="5">Belongs to the protein kinase superfamily. Ser/Thr protein kinase family.</text>
</comment>
<comment type="sequence caution" evidence="9">
    <conflict type="erroneous gene model prediction">
        <sequence resource="EMBL-CDS" id="BAB02668"/>
    </conflict>
</comment>